<keyword id="KW-0025">Alternative splicing</keyword>
<keyword id="KW-0217">Developmental protein</keyword>
<keyword id="KW-0225">Disease variant</keyword>
<keyword id="KW-0242">Dwarfism</keyword>
<keyword id="KW-0539">Nucleus</keyword>
<keyword id="KW-0597">Phosphoprotein</keyword>
<keyword id="KW-1267">Proteomics identification</keyword>
<keyword id="KW-1185">Reference proteome</keyword>
<protein>
    <recommendedName>
        <fullName>Protein downstream neighbor of Son</fullName>
    </recommendedName>
    <alternativeName>
        <fullName>B17</fullName>
    </alternativeName>
</protein>
<name>DONS_HUMAN</name>
<gene>
    <name type="primary">DONSON</name>
    <name type="synonym">C21orf60</name>
</gene>
<evidence type="ECO:0000256" key="1">
    <source>
        <dbReference type="SAM" id="MobiDB-lite"/>
    </source>
</evidence>
<evidence type="ECO:0000269" key="2">
    <source>
    </source>
</evidence>
<evidence type="ECO:0000269" key="3">
    <source>
    </source>
</evidence>
<evidence type="ECO:0000303" key="4">
    <source>
    </source>
</evidence>
<evidence type="ECO:0000305" key="5"/>
<evidence type="ECO:0007744" key="6">
    <source>
    </source>
</evidence>
<organism>
    <name type="scientific">Homo sapiens</name>
    <name type="common">Human</name>
    <dbReference type="NCBI Taxonomy" id="9606"/>
    <lineage>
        <taxon>Eukaryota</taxon>
        <taxon>Metazoa</taxon>
        <taxon>Chordata</taxon>
        <taxon>Craniata</taxon>
        <taxon>Vertebrata</taxon>
        <taxon>Euteleostomi</taxon>
        <taxon>Mammalia</taxon>
        <taxon>Eutheria</taxon>
        <taxon>Euarchontoglires</taxon>
        <taxon>Primates</taxon>
        <taxon>Haplorrhini</taxon>
        <taxon>Catarrhini</taxon>
        <taxon>Hominidae</taxon>
        <taxon>Homo</taxon>
    </lineage>
</organism>
<feature type="chain" id="PRO_0000079979" description="Protein downstream neighbor of Son">
    <location>
        <begin position="1"/>
        <end position="566"/>
    </location>
</feature>
<feature type="region of interest" description="Disordered" evidence="1">
    <location>
        <begin position="1"/>
        <end position="110"/>
    </location>
</feature>
<feature type="compositionally biased region" description="Gly residues" evidence="1">
    <location>
        <begin position="62"/>
        <end position="72"/>
    </location>
</feature>
<feature type="compositionally biased region" description="Low complexity" evidence="1">
    <location>
        <begin position="73"/>
        <end position="82"/>
    </location>
</feature>
<feature type="modified residue" description="Phosphoserine" evidence="6">
    <location>
        <position position="28"/>
    </location>
</feature>
<feature type="modified residue" description="Phosphoserine" evidence="6">
    <location>
        <position position="34"/>
    </location>
</feature>
<feature type="splice variant" id="VSP_004194" description="In isoform 3." evidence="4">
    <original>SVS</original>
    <variation>HGV</variation>
    <location>
        <begin position="263"/>
        <end position="265"/>
    </location>
</feature>
<feature type="splice variant" id="VSP_004192" description="In isoform 2." evidence="4">
    <original>S</original>
    <variation>Y</variation>
    <location>
        <position position="263"/>
    </location>
</feature>
<feature type="splice variant" id="VSP_004193" description="In isoform 2." evidence="4">
    <location>
        <begin position="264"/>
        <end position="566"/>
    </location>
</feature>
<feature type="splice variant" id="VSP_004195" description="In isoform 3." evidence="4">
    <location>
        <begin position="266"/>
        <end position="566"/>
    </location>
</feature>
<feature type="sequence variant" id="VAR_079330" description="No effect on nuclear localization; complements loss of endogenous DONSON by rescuing the spontaneous fork stalling observed after DONSON depletion; dbSNP:rs768071555." evidence="2">
    <original>S</original>
    <variation>R</variation>
    <location>
        <position position="28"/>
    </location>
</feature>
<feature type="sequence variant" id="VAR_079331" description="In MISSLA." evidence="2">
    <original>C</original>
    <variation>R</variation>
    <location>
        <position position="278"/>
    </location>
</feature>
<feature type="sequence variant" id="VAR_079332" description="In MISSLA; loss of nuclear localization." evidence="2">
    <original>Y</original>
    <variation>C</variation>
    <location>
        <position position="282"/>
    </location>
</feature>
<feature type="sequence variant" id="VAR_079333" description="In MISSLA; loss of nuclear localization; dbSNP:rs779803447." evidence="2">
    <original>F</original>
    <variation>L</variation>
    <location>
        <position position="292"/>
    </location>
</feature>
<feature type="sequence variant" id="VAR_079334" description="In MISSLA." evidence="2">
    <location>
        <begin position="293"/>
        <end position="566"/>
    </location>
</feature>
<feature type="sequence variant" id="VAR_079335" description="In MISSLA; reduced nuclear localization." evidence="2">
    <location>
        <begin position="417"/>
        <end position="418"/>
    </location>
</feature>
<feature type="sequence variant" id="VAR_079336" description="In MISSLA." evidence="2">
    <location>
        <begin position="419"/>
        <end position="566"/>
    </location>
</feature>
<feature type="sequence variant" id="VAR_079337" description="In MISSLA." evidence="2">
    <location>
        <begin position="428"/>
        <end position="566"/>
    </location>
</feature>
<feature type="sequence variant" id="VAR_079338" description="In MISSLA." evidence="2">
    <original>P</original>
    <variation>S</variation>
    <location>
        <position position="433"/>
    </location>
</feature>
<feature type="sequence variant" id="VAR_079339" description="In MISSLA; reduced protein level; reduced nuclear localization; dbSNP:rs1135401959." evidence="2">
    <original>M</original>
    <variation>T</variation>
    <location>
        <position position="446"/>
    </location>
</feature>
<feature type="sequence variant" id="VAR_079340" description="In MISSLA; uncertain significance; reduced protein level; no effect on nuclear localization; does not complement loss of endogenous DONSON when tested for the rescue of the spontaneous fork stalling observed after DONSON depletion; dbSNP:rs146664036." evidence="2">
    <original>K</original>
    <variation>T</variation>
    <location>
        <position position="489"/>
    </location>
</feature>
<feature type="sequence variant" id="VAR_079341" description="In MISSLA; dbSNP:rs374688527." evidence="2">
    <original>E</original>
    <variation>K</variation>
    <location>
        <position position="504"/>
    </location>
</feature>
<feature type="sequence variant" id="VAR_079342" description="In MISSLA; reduced nuclear localization." evidence="2">
    <original>Q</original>
    <variation>QK</variation>
    <location>
        <position position="543"/>
    </location>
</feature>
<feature type="sequence variant" id="VAR_079343" description="In MISSLA; uncertain significance." evidence="2">
    <location>
        <begin position="563"/>
        <end position="566"/>
    </location>
</feature>
<feature type="sequence conflict" description="In Ref. 4; AAF72948." evidence="5" ref="4">
    <original>P</original>
    <variation>L</variation>
    <location>
        <position position="224"/>
    </location>
</feature>
<feature type="sequence conflict" description="In Ref. 4; AAF72947." evidence="5" ref="4">
    <original>S</original>
    <variation>Y</variation>
    <location>
        <position position="437"/>
    </location>
</feature>
<feature type="sequence conflict" description="In Ref. 1; BAC11320." evidence="5" ref="1">
    <original>L</original>
    <variation>Q</variation>
    <location>
        <position position="557"/>
    </location>
</feature>
<reference key="1">
    <citation type="journal article" date="2004" name="Nat. Genet.">
        <title>Complete sequencing and characterization of 21,243 full-length human cDNAs.</title>
        <authorList>
            <person name="Ota T."/>
            <person name="Suzuki Y."/>
            <person name="Nishikawa T."/>
            <person name="Otsuki T."/>
            <person name="Sugiyama T."/>
            <person name="Irie R."/>
            <person name="Wakamatsu A."/>
            <person name="Hayashi K."/>
            <person name="Sato H."/>
            <person name="Nagai K."/>
            <person name="Kimura K."/>
            <person name="Makita H."/>
            <person name="Sekine M."/>
            <person name="Obayashi M."/>
            <person name="Nishi T."/>
            <person name="Shibahara T."/>
            <person name="Tanaka T."/>
            <person name="Ishii S."/>
            <person name="Yamamoto J."/>
            <person name="Saito K."/>
            <person name="Kawai Y."/>
            <person name="Isono Y."/>
            <person name="Nakamura Y."/>
            <person name="Nagahari K."/>
            <person name="Murakami K."/>
            <person name="Yasuda T."/>
            <person name="Iwayanagi T."/>
            <person name="Wagatsuma M."/>
            <person name="Shiratori A."/>
            <person name="Sudo H."/>
            <person name="Hosoiri T."/>
            <person name="Kaku Y."/>
            <person name="Kodaira H."/>
            <person name="Kondo H."/>
            <person name="Sugawara M."/>
            <person name="Takahashi M."/>
            <person name="Kanda K."/>
            <person name="Yokoi T."/>
            <person name="Furuya T."/>
            <person name="Kikkawa E."/>
            <person name="Omura Y."/>
            <person name="Abe K."/>
            <person name="Kamihara K."/>
            <person name="Katsuta N."/>
            <person name="Sato K."/>
            <person name="Tanikawa M."/>
            <person name="Yamazaki M."/>
            <person name="Ninomiya K."/>
            <person name="Ishibashi T."/>
            <person name="Yamashita H."/>
            <person name="Murakawa K."/>
            <person name="Fujimori K."/>
            <person name="Tanai H."/>
            <person name="Kimata M."/>
            <person name="Watanabe M."/>
            <person name="Hiraoka S."/>
            <person name="Chiba Y."/>
            <person name="Ishida S."/>
            <person name="Ono Y."/>
            <person name="Takiguchi S."/>
            <person name="Watanabe S."/>
            <person name="Yosida M."/>
            <person name="Hotuta T."/>
            <person name="Kusano J."/>
            <person name="Kanehori K."/>
            <person name="Takahashi-Fujii A."/>
            <person name="Hara H."/>
            <person name="Tanase T.-O."/>
            <person name="Nomura Y."/>
            <person name="Togiya S."/>
            <person name="Komai F."/>
            <person name="Hara R."/>
            <person name="Takeuchi K."/>
            <person name="Arita M."/>
            <person name="Imose N."/>
            <person name="Musashino K."/>
            <person name="Yuuki H."/>
            <person name="Oshima A."/>
            <person name="Sasaki N."/>
            <person name="Aotsuka S."/>
            <person name="Yoshikawa Y."/>
            <person name="Matsunawa H."/>
            <person name="Ichihara T."/>
            <person name="Shiohata N."/>
            <person name="Sano S."/>
            <person name="Moriya S."/>
            <person name="Momiyama H."/>
            <person name="Satoh N."/>
            <person name="Takami S."/>
            <person name="Terashima Y."/>
            <person name="Suzuki O."/>
            <person name="Nakagawa S."/>
            <person name="Senoh A."/>
            <person name="Mizoguchi H."/>
            <person name="Goto Y."/>
            <person name="Shimizu F."/>
            <person name="Wakebe H."/>
            <person name="Hishigaki H."/>
            <person name="Watanabe T."/>
            <person name="Sugiyama A."/>
            <person name="Takemoto M."/>
            <person name="Kawakami B."/>
            <person name="Yamazaki M."/>
            <person name="Watanabe K."/>
            <person name="Kumagai A."/>
            <person name="Itakura S."/>
            <person name="Fukuzumi Y."/>
            <person name="Fujimori Y."/>
            <person name="Komiyama M."/>
            <person name="Tashiro H."/>
            <person name="Tanigami A."/>
            <person name="Fujiwara T."/>
            <person name="Ono T."/>
            <person name="Yamada K."/>
            <person name="Fujii Y."/>
            <person name="Ozaki K."/>
            <person name="Hirao M."/>
            <person name="Ohmori Y."/>
            <person name="Kawabata A."/>
            <person name="Hikiji T."/>
            <person name="Kobatake N."/>
            <person name="Inagaki H."/>
            <person name="Ikema Y."/>
            <person name="Okamoto S."/>
            <person name="Okitani R."/>
            <person name="Kawakami T."/>
            <person name="Noguchi S."/>
            <person name="Itoh T."/>
            <person name="Shigeta K."/>
            <person name="Senba T."/>
            <person name="Matsumura K."/>
            <person name="Nakajima Y."/>
            <person name="Mizuno T."/>
            <person name="Morinaga M."/>
            <person name="Sasaki M."/>
            <person name="Togashi T."/>
            <person name="Oyama M."/>
            <person name="Hata H."/>
            <person name="Watanabe M."/>
            <person name="Komatsu T."/>
            <person name="Mizushima-Sugano J."/>
            <person name="Satoh T."/>
            <person name="Shirai Y."/>
            <person name="Takahashi Y."/>
            <person name="Nakagawa K."/>
            <person name="Okumura K."/>
            <person name="Nagase T."/>
            <person name="Nomura N."/>
            <person name="Kikuchi H."/>
            <person name="Masuho Y."/>
            <person name="Yamashita R."/>
            <person name="Nakai K."/>
            <person name="Yada T."/>
            <person name="Nakamura Y."/>
            <person name="Ohara O."/>
            <person name="Isogai T."/>
            <person name="Sugano S."/>
        </authorList>
    </citation>
    <scope>NUCLEOTIDE SEQUENCE [LARGE SCALE MRNA] (ISOFORM 1)</scope>
    <source>
        <tissue>Teratocarcinoma</tissue>
    </source>
</reference>
<reference key="2">
    <citation type="journal article" date="2007" name="BMC Genomics">
        <title>The full-ORF clone resource of the German cDNA consortium.</title>
        <authorList>
            <person name="Bechtel S."/>
            <person name="Rosenfelder H."/>
            <person name="Duda A."/>
            <person name="Schmidt C.P."/>
            <person name="Ernst U."/>
            <person name="Wellenreuther R."/>
            <person name="Mehrle A."/>
            <person name="Schuster C."/>
            <person name="Bahr A."/>
            <person name="Bloecker H."/>
            <person name="Heubner D."/>
            <person name="Hoerlein A."/>
            <person name="Michel G."/>
            <person name="Wedler H."/>
            <person name="Koehrer K."/>
            <person name="Ottenwaelder B."/>
            <person name="Poustka A."/>
            <person name="Wiemann S."/>
            <person name="Schupp I."/>
        </authorList>
    </citation>
    <scope>NUCLEOTIDE SEQUENCE [LARGE SCALE MRNA] (ISOFORM 1)</scope>
    <source>
        <tissue>Testis</tissue>
    </source>
</reference>
<reference key="3">
    <citation type="journal article" date="2004" name="Genome Res.">
        <title>The status, quality, and expansion of the NIH full-length cDNA project: the Mammalian Gene Collection (MGC).</title>
        <authorList>
            <consortium name="The MGC Project Team"/>
        </authorList>
    </citation>
    <scope>NUCLEOTIDE SEQUENCE [LARGE SCALE MRNA] (ISOFORM 1)</scope>
    <source>
        <tissue>Mammary gland</tissue>
    </source>
</reference>
<reference key="4">
    <citation type="journal article" date="2000" name="Gene">
        <title>Criteria for gene identification and features of genome organization: analysis of 6.5 Mb of DNA sequence from human chromosome 21.</title>
        <authorList>
            <person name="Slavov D."/>
            <person name="Hattori M."/>
            <person name="Sakaki Y."/>
            <person name="Rosenthal A."/>
            <person name="Shimizu N."/>
            <person name="Minoshima S."/>
            <person name="Kudoh J."/>
            <person name="Yaspo M.-L."/>
            <person name="Ramser J."/>
            <person name="Reinhardt R."/>
            <person name="Reimer C."/>
            <person name="Clancy K."/>
            <person name="Rynditch A."/>
            <person name="Gardiner K."/>
        </authorList>
    </citation>
    <scope>NUCLEOTIDE SEQUENCE [MRNA] OF 108-566 (ISOFORMS 1; 2 AND 3)</scope>
</reference>
<reference key="5">
    <citation type="journal article" date="2004" name="Genome Biol.">
        <title>An unappreciated role for RNA surveillance.</title>
        <authorList>
            <person name="Hillman R.T."/>
            <person name="Green R.E."/>
            <person name="Brenner S.E."/>
        </authorList>
    </citation>
    <scope>SPLICE ISOFORM(S) THAT ARE POTENTIAL NMD TARGET(S)</scope>
</reference>
<reference key="6">
    <citation type="journal article" date="2008" name="Proc. Natl. Acad. Sci. U.S.A.">
        <title>A quantitative atlas of mitotic phosphorylation.</title>
        <authorList>
            <person name="Dephoure N."/>
            <person name="Zhou C."/>
            <person name="Villen J."/>
            <person name="Beausoleil S.A."/>
            <person name="Bakalarski C.E."/>
            <person name="Elledge S.J."/>
            <person name="Gygi S.P."/>
        </authorList>
    </citation>
    <scope>IDENTIFICATION BY MASS SPECTROMETRY [LARGE SCALE ANALYSIS]</scope>
    <source>
        <tissue>Cervix carcinoma</tissue>
    </source>
</reference>
<reference key="7">
    <citation type="journal article" date="2013" name="J. Proteome Res.">
        <title>Toward a comprehensive characterization of a human cancer cell phosphoproteome.</title>
        <authorList>
            <person name="Zhou H."/>
            <person name="Di Palma S."/>
            <person name="Preisinger C."/>
            <person name="Peng M."/>
            <person name="Polat A.N."/>
            <person name="Heck A.J."/>
            <person name="Mohammed S."/>
        </authorList>
    </citation>
    <scope>PHOSPHORYLATION [LARGE SCALE ANALYSIS] AT SER-28 AND SER-34</scope>
    <scope>IDENTIFICATION BY MASS SPECTROMETRY [LARGE SCALE ANALYSIS]</scope>
    <source>
        <tissue>Cervix carcinoma</tissue>
        <tissue>Erythroleukemia</tissue>
    </source>
</reference>
<reference key="8">
    <citation type="journal article" date="2017" name="Genome Res.">
        <title>Integrated genome and transcriptome sequencing identifies a noncoding mutation in the genome replication factor DONSON as the cause of microcephaly-micromelia syndrome.</title>
        <authorList>
            <person name="Evrony G.D."/>
            <person name="Cordero D.R."/>
            <person name="Shen J."/>
            <person name="Partlow J.N."/>
            <person name="Yu T.W."/>
            <person name="Rodin R.E."/>
            <person name="Hill R.S."/>
            <person name="Coulter M.E."/>
            <person name="Lam A.N."/>
            <person name="Jayaraman D."/>
            <person name="Gerrelli D."/>
            <person name="Diaz D.G."/>
            <person name="Santos C."/>
            <person name="Morrison V."/>
            <person name="Galli A."/>
            <person name="Tschulena U."/>
            <person name="Wiemann S."/>
            <person name="Martel M.J."/>
            <person name="Spooner B."/>
            <person name="Ryu S.C."/>
            <person name="Elhosary P.C."/>
            <person name="Richardson J.M."/>
            <person name="Tierney D."/>
            <person name="Robinson C.A."/>
            <person name="Chibbar R."/>
            <person name="Diudea D."/>
            <person name="Folkerth R."/>
            <person name="Wiebe S."/>
            <person name="Barkovich A.J."/>
            <person name="Mochida G.H."/>
            <person name="Irvine J."/>
            <person name="Lemire E.G."/>
            <person name="Blakley P."/>
            <person name="Walsh C.A."/>
        </authorList>
    </citation>
    <scope>INVOLVEMENT IN MIMIS</scope>
    <scope>TISSUE SPECIFICITY</scope>
    <scope>DEVELOPMENTAL STAGE</scope>
</reference>
<reference key="9">
    <citation type="journal article" date="2017" name="Nat. Genet.">
        <title>Mutations in DONSON disrupt replication fork stability and cause microcephalic dwarfism.</title>
        <authorList>
            <person name="Reynolds J.J."/>
            <person name="Bicknell L.S."/>
            <person name="Carroll P."/>
            <person name="Higgs M.R."/>
            <person name="Shaheen R."/>
            <person name="Murray J.E."/>
            <person name="Papadopoulos D.K."/>
            <person name="Leitch A."/>
            <person name="Murina O."/>
            <person name="Tarnauskaite Z."/>
            <person name="Wessel S.R."/>
            <person name="Zlatanou A."/>
            <person name="Vernet A."/>
            <person name="von Kriegsheim A."/>
            <person name="Mottram R.M."/>
            <person name="Logan C.V."/>
            <person name="Bye H."/>
            <person name="Li Y."/>
            <person name="Brean A."/>
            <person name="Maddirevula S."/>
            <person name="Challis R.C."/>
            <person name="Skouloudaki K."/>
            <person name="Almoisheer A."/>
            <person name="Alsaif H.S."/>
            <person name="Amar A."/>
            <person name="Prescott N.J."/>
            <person name="Bober M.B."/>
            <person name="Duker A."/>
            <person name="Faqeih E."/>
            <person name="Seidahmed M.Z."/>
            <person name="Al Tala S."/>
            <person name="Alswaid A."/>
            <person name="Ahmed S."/>
            <person name="Al-Aama J.Y."/>
            <person name="Altmueller J."/>
            <person name="Al Balwi M."/>
            <person name="Brady A.F."/>
            <person name="Chessa L."/>
            <person name="Cox H."/>
            <person name="Fischetto R."/>
            <person name="Heller R."/>
            <person name="Henderson B.D."/>
            <person name="Hobson E."/>
            <person name="Nuernberg P."/>
            <person name="Percin E.F."/>
            <person name="Peron A."/>
            <person name="Spaccini L."/>
            <person name="Quigley A.J."/>
            <person name="Thakur S."/>
            <person name="Wise C.A."/>
            <person name="Yoon G."/>
            <person name="Alnemer M."/>
            <person name="Tomancak P."/>
            <person name="Yigit G."/>
            <person name="Taylor A.M."/>
            <person name="Reijns M.A."/>
            <person name="Simpson M.A."/>
            <person name="Cortez D."/>
            <person name="Alkuraya F.S."/>
            <person name="Mathew C.G."/>
            <person name="Jackson A.P."/>
            <person name="Stewart G.S."/>
        </authorList>
    </citation>
    <scope>INVOLVEMENT IN MISSLA</scope>
    <scope>VARIANTS MISSLA ARG-278; CYS-282; LEU-292; 293-ARG--SER-566 DEL; 417-ASN-SER-418 DEL; 419-LYS--SER-566 DEL; 428-GLN--SER-566 DEL; SER-433; THR-446; THR-489; LYS-504; LYS-543 INS AND 563-ASN--SER-566 DEL</scope>
    <scope>CHARACTERIZATION OF VARIANTS MISSLA CYS-282; LEU-292; 417-ASN-SER-418 DEL; THR-446; THR-489 AND LYS-543</scope>
    <scope>VARIANT ARG-28</scope>
    <scope>CHARACTERIZATION OF VARIANT ARG-28</scope>
    <scope>FUNCTION</scope>
    <scope>SUBCELLULAR LOCATION</scope>
    <scope>INDUCTION</scope>
    <scope>IDENTIFICATION IN THE REPLISOME COMPLEX</scope>
    <scope>INTERACTION WITH MCM2; MCM7; PCNA AND TICRR</scope>
</reference>
<proteinExistence type="evidence at protein level"/>
<accession>Q9NYP3</accession>
<accession>Q8NC53</accession>
<accession>Q9NSR9</accession>
<accession>Q9NVZ5</accession>
<accession>Q9NYP1</accession>
<accession>Q9NYP2</accession>
<dbReference type="EMBL" id="AK074964">
    <property type="protein sequence ID" value="BAC11320.1"/>
    <property type="molecule type" value="mRNA"/>
</dbReference>
<dbReference type="EMBL" id="AL157441">
    <property type="protein sequence ID" value="CAB75661.1"/>
    <property type="molecule type" value="mRNA"/>
</dbReference>
<dbReference type="EMBL" id="BC048266">
    <property type="protein sequence ID" value="AAH48266.1"/>
    <property type="molecule type" value="mRNA"/>
</dbReference>
<dbReference type="EMBL" id="AF232673">
    <property type="protein sequence ID" value="AAF72947.1"/>
    <property type="molecule type" value="mRNA"/>
</dbReference>
<dbReference type="EMBL" id="AF232674">
    <property type="protein sequence ID" value="AAF72948.1"/>
    <property type="molecule type" value="mRNA"/>
</dbReference>
<dbReference type="EMBL" id="AF232675">
    <property type="protein sequence ID" value="AAF72949.1"/>
    <property type="molecule type" value="mRNA"/>
</dbReference>
<dbReference type="CCDS" id="CCDS13632.1">
    <molecule id="Q9NYP3-1"/>
</dbReference>
<dbReference type="PIR" id="T46933">
    <property type="entry name" value="T46933"/>
</dbReference>
<dbReference type="RefSeq" id="NP_060083.1">
    <molecule id="Q9NYP3-1"/>
    <property type="nucleotide sequence ID" value="NM_017613.4"/>
</dbReference>
<dbReference type="SMR" id="Q9NYP3"/>
<dbReference type="BioGRID" id="119008">
    <property type="interactions" value="43"/>
</dbReference>
<dbReference type="CORUM" id="Q9NYP3"/>
<dbReference type="FunCoup" id="Q9NYP3">
    <property type="interactions" value="1809"/>
</dbReference>
<dbReference type="IntAct" id="Q9NYP3">
    <property type="interactions" value="12"/>
</dbReference>
<dbReference type="STRING" id="9606.ENSP00000307143"/>
<dbReference type="iPTMnet" id="Q9NYP3"/>
<dbReference type="PhosphoSitePlus" id="Q9NYP3"/>
<dbReference type="BioMuta" id="DONSON"/>
<dbReference type="jPOST" id="Q9NYP3"/>
<dbReference type="MassIVE" id="Q9NYP3"/>
<dbReference type="PaxDb" id="9606-ENSP00000307143"/>
<dbReference type="PeptideAtlas" id="Q9NYP3"/>
<dbReference type="ProteomicsDB" id="83256">
    <molecule id="Q9NYP3-1"/>
</dbReference>
<dbReference type="ProteomicsDB" id="83257">
    <molecule id="Q9NYP3-2"/>
</dbReference>
<dbReference type="ProteomicsDB" id="83258">
    <molecule id="Q9NYP3-3"/>
</dbReference>
<dbReference type="Pumba" id="Q9NYP3"/>
<dbReference type="Antibodypedia" id="35001">
    <property type="antibodies" value="68 antibodies from 15 providers"/>
</dbReference>
<dbReference type="DNASU" id="29980"/>
<dbReference type="Ensembl" id="ENST00000303071.10">
    <molecule id="Q9NYP3-1"/>
    <property type="protein sequence ID" value="ENSP00000307143.4"/>
    <property type="gene ID" value="ENSG00000159147.18"/>
</dbReference>
<dbReference type="GeneID" id="29980"/>
<dbReference type="KEGG" id="hsa:29980"/>
<dbReference type="MANE-Select" id="ENST00000303071.10">
    <property type="protein sequence ID" value="ENSP00000307143.4"/>
    <property type="RefSeq nucleotide sequence ID" value="NM_017613.4"/>
    <property type="RefSeq protein sequence ID" value="NP_060083.1"/>
</dbReference>
<dbReference type="UCSC" id="uc002ysk.5">
    <molecule id="Q9NYP3-1"/>
    <property type="organism name" value="human"/>
</dbReference>
<dbReference type="AGR" id="HGNC:2993"/>
<dbReference type="CTD" id="29980"/>
<dbReference type="DisGeNET" id="29980"/>
<dbReference type="GeneCards" id="DONSON"/>
<dbReference type="HGNC" id="HGNC:2993">
    <property type="gene designation" value="DONSON"/>
</dbReference>
<dbReference type="HPA" id="ENSG00000159147">
    <property type="expression patterns" value="Low tissue specificity"/>
</dbReference>
<dbReference type="MalaCards" id="DONSON"/>
<dbReference type="MIM" id="251230">
    <property type="type" value="phenotype"/>
</dbReference>
<dbReference type="MIM" id="611428">
    <property type="type" value="gene"/>
</dbReference>
<dbReference type="MIM" id="617604">
    <property type="type" value="phenotype"/>
</dbReference>
<dbReference type="neXtProt" id="NX_Q9NYP3"/>
<dbReference type="OpenTargets" id="ENSG00000159147"/>
<dbReference type="Orphanet" id="572768">
    <property type="disease" value="Microcephaly-micromelia syndrome"/>
</dbReference>
<dbReference type="Orphanet" id="572773">
    <property type="disease" value="Microcephaly-short stature-limb abnormalities syndrome"/>
</dbReference>
<dbReference type="PharmGKB" id="PA27459"/>
<dbReference type="VEuPathDB" id="HostDB:ENSG00000159147"/>
<dbReference type="eggNOG" id="KOG4734">
    <property type="taxonomic scope" value="Eukaryota"/>
</dbReference>
<dbReference type="GeneTree" id="ENSGT00390000000447"/>
<dbReference type="InParanoid" id="Q9NYP3"/>
<dbReference type="OMA" id="WCLKTRV"/>
<dbReference type="OrthoDB" id="534063at2759"/>
<dbReference type="PAN-GO" id="Q9NYP3">
    <property type="GO annotations" value="2 GO annotations based on evolutionary models"/>
</dbReference>
<dbReference type="PhylomeDB" id="Q9NYP3"/>
<dbReference type="TreeFam" id="TF318976"/>
<dbReference type="PathwayCommons" id="Q9NYP3"/>
<dbReference type="BioGRID-ORCS" id="29980">
    <property type="hits" value="773 hits in 1157 CRISPR screens"/>
</dbReference>
<dbReference type="CD-CODE" id="8C2F96ED">
    <property type="entry name" value="Centrosome"/>
</dbReference>
<dbReference type="ChiTaRS" id="DONSON">
    <property type="organism name" value="human"/>
</dbReference>
<dbReference type="GenomeRNAi" id="29980"/>
<dbReference type="Pharos" id="Q9NYP3">
    <property type="development level" value="Tbio"/>
</dbReference>
<dbReference type="PRO" id="PR:Q9NYP3"/>
<dbReference type="Proteomes" id="UP000005640">
    <property type="component" value="Chromosome 21"/>
</dbReference>
<dbReference type="RNAct" id="Q9NYP3">
    <property type="molecule type" value="protein"/>
</dbReference>
<dbReference type="Bgee" id="ENSG00000159147">
    <property type="expression patterns" value="Expressed in ventricular zone and 166 other cell types or tissues"/>
</dbReference>
<dbReference type="ExpressionAtlas" id="Q9NYP3">
    <property type="expression patterns" value="baseline and differential"/>
</dbReference>
<dbReference type="GO" id="GO:0005634">
    <property type="term" value="C:nucleus"/>
    <property type="evidence" value="ECO:0000314"/>
    <property type="project" value="UniProtKB"/>
</dbReference>
<dbReference type="GO" id="GO:0005657">
    <property type="term" value="C:replication fork"/>
    <property type="evidence" value="ECO:0000314"/>
    <property type="project" value="UniProtKB"/>
</dbReference>
<dbReference type="GO" id="GO:0030894">
    <property type="term" value="C:replisome"/>
    <property type="evidence" value="ECO:0000314"/>
    <property type="project" value="UniProtKB"/>
</dbReference>
<dbReference type="GO" id="GO:0000077">
    <property type="term" value="P:DNA damage checkpoint signaling"/>
    <property type="evidence" value="ECO:0000315"/>
    <property type="project" value="UniProtKB"/>
</dbReference>
<dbReference type="GO" id="GO:0006260">
    <property type="term" value="P:DNA replication"/>
    <property type="evidence" value="ECO:0000315"/>
    <property type="project" value="UniProtKB"/>
</dbReference>
<dbReference type="GO" id="GO:0033314">
    <property type="term" value="P:mitotic DNA replication checkpoint signaling"/>
    <property type="evidence" value="ECO:0000315"/>
    <property type="project" value="UniProtKB"/>
</dbReference>
<dbReference type="GO" id="GO:0007095">
    <property type="term" value="P:mitotic G2 DNA damage checkpoint signaling"/>
    <property type="evidence" value="ECO:0000315"/>
    <property type="project" value="UniProtKB"/>
</dbReference>
<dbReference type="GO" id="GO:0033260">
    <property type="term" value="P:nuclear DNA replication"/>
    <property type="evidence" value="ECO:0000318"/>
    <property type="project" value="GO_Central"/>
</dbReference>
<dbReference type="GO" id="GO:0031297">
    <property type="term" value="P:replication fork processing"/>
    <property type="evidence" value="ECO:0000315"/>
    <property type="project" value="UniProtKB"/>
</dbReference>
<dbReference type="InterPro" id="IPR024861">
    <property type="entry name" value="Donson"/>
</dbReference>
<dbReference type="PANTHER" id="PTHR12972">
    <property type="entry name" value="DOWNSTREAM NEIGHBOR OF SON"/>
    <property type="match status" value="1"/>
</dbReference>
<dbReference type="PANTHER" id="PTHR12972:SF0">
    <property type="entry name" value="PROTEIN DOWNSTREAM NEIGHBOR OF SON"/>
    <property type="match status" value="1"/>
</dbReference>
<dbReference type="PRINTS" id="PR02064">
    <property type="entry name" value="DONSON"/>
</dbReference>
<comment type="function">
    <text evidence="2">Replisome component that maintains genome stability by protecting stalled or damaged replication forks. After the induction of replication stress, required for the stabilization of stalled replication forks, the efficient activation of the intra-S-phase and G/2M cell-cycle checkpoints and the maintenance of genome stability.</text>
</comment>
<comment type="subunit">
    <text evidence="2">Component of the replisome complex composed of at least DONSON, MCM2, MCM7, PCNA and TICRR; interaction at least with PCNA occurs during DNA replication.</text>
</comment>
<comment type="interaction">
    <interactant intactId="EBI-32724208">
        <id>Q9NYP3</id>
    </interactant>
    <interactant intactId="EBI-9019496">
        <id>Q14691</id>
        <label>GINS1</label>
    </interactant>
    <organismsDiffer>false</organismsDiffer>
    <experiments>7</experiments>
</comment>
<comment type="interaction">
    <interactant intactId="EBI-32724208">
        <id>Q9NYP3</id>
    </interactant>
    <interactant intactId="EBI-374819">
        <id>P49736</id>
        <label>MCM2</label>
    </interactant>
    <organismsDiffer>false</organismsDiffer>
    <experiments>10</experiments>
</comment>
<comment type="subcellular location">
    <subcellularLocation>
        <location evidence="2">Nucleus</location>
    </subcellularLocation>
    <text evidence="2">Localizes at DNA replication sites.</text>
</comment>
<comment type="alternative products">
    <event type="alternative splicing"/>
    <isoform>
        <id>Q9NYP3-1</id>
        <name>1</name>
        <sequence type="displayed"/>
    </isoform>
    <isoform>
        <id>Q9NYP3-2</id>
        <name>2</name>
        <sequence type="described" ref="VSP_004192 VSP_004193"/>
    </isoform>
    <isoform>
        <id>Q9NYP3-3</id>
        <name>3</name>
        <sequence type="described" ref="VSP_004194 VSP_004195"/>
    </isoform>
    <text>Experimental confirmation may be lacking for some isoforms.</text>
</comment>
<comment type="tissue specificity">
    <text evidence="3">Expressed in the brain, with higher levels in prenatal compared to adult brain.</text>
</comment>
<comment type="developmental stage">
    <text evidence="3">Expressed during embryonic development. At Carnegie stage 22 (about 7.5 weeks gestation), expressed in numerous tissues, including brain, heart, lung, gastrointestinal tract, kidney, hind limb and forelimb digits. Similar expression is observed at 9 weeks of gestation. In the brain of a 9-week old fetus, prominently expressed in the neocortex subventricular zone and in the cortical plate and also detected in the ganglionic eminences. At 12 weeks of gestation, expression in the fetal brain is prominent in the basal ganglia and the ventricular and subventricular zones and cortical plate of the neocortex, mesencephalon, and rhombencephalon. At 15 and 16 weeks, highly expressed in the ventricular and subventricular zones, respectively. Highly expressed in the ganglionic eminence of 15 week-old brain and subplate of 16 week-old brain. At 20 weeks of gestation, expressed in the ventricular and subventricular zones, intermediate zone, and cortical plate of the neocortex. At 21 weeks of gestation, expressed in the neocortex with highest levels in the cortical plate.</text>
</comment>
<comment type="induction">
    <text evidence="2">Expression is cell-cycle dependent with highest levels during S phase.</text>
</comment>
<comment type="disease" evidence="3">
    <disease id="DI-05053">
        <name>Microcephaly-micromelia syndrome</name>
        <acronym>MIMIS</acronym>
        <description>A severe autosomal recessive disorder characterized by intrauterine growth restriction, marked microcephaly, craniofacial anomalies, skeletal dysplasia, and variable malformations of the limbs, particularly the upper limbs. It usually results in death in utero or in the perinatal period.</description>
        <dbReference type="MIM" id="251230"/>
    </disease>
    <text evidence="3">The disease is caused by variants affecting the gene represented in this entry. This extremely rare syndrome is caused by an intronic mutation that leads to the retention of intron 6, probably resulting in non-sense mediated mRNA decay. This isoform has also been detected in healthy tissues, but at much lower levels than in MIMIS samples.</text>
</comment>
<comment type="disease" evidence="2">
    <disease id="DI-05065">
        <name>Microcephaly, short stature, and limb abnormalities</name>
        <acronym>MISSLA</acronym>
        <description>An autosomal recessive disorder characterized by intrauterine growth retardation, microcephaly, variable short stature, and limb abnormalities mainly affecting the upper limb and radial ray. Mild intellectual disability and developmental delay is observed in some patients.</description>
        <dbReference type="MIM" id="617604"/>
    </disease>
    <text>The disease is caused by variants affecting the gene represented in this entry.</text>
</comment>
<comment type="miscellaneous">
    <molecule>Isoform 2</molecule>
    <text evidence="5">May be produced at very low levels due to a premature stop codon in the mRNA, leading to nonsense-mediated mRNA decay.</text>
</comment>
<comment type="miscellaneous">
    <molecule>Isoform 3</molecule>
    <text evidence="5">May be produced at very low levels due to a premature stop codon in the mRNA, leading to nonsense-mediated mRNA decay.</text>
</comment>
<comment type="similarity">
    <text evidence="5">Belongs to the DONSON family.</text>
</comment>
<sequence>MALSVPGYSPGFRKPPEVVRLRRKRARSRGAAASPPRELTEPAARRAALVAGLPLRPFPAAGGRGGGSGGGPAAARRNPFARLDNRPRVAAEPPDGPAREQPEAPVPFLDSNQENDLLWEEKFPERTTVTELPQTSHVSFSEPDIPSSKSTELPVDWSIKTRLLFTSSQPFTWADHLKAQEEAQGLVQHCRATEVTLPKSIQDPKLSSELRCTFQQSLIYWLHPALSWLPLFPRIGADRKMAGKTSPWSNDATLQHVLMSDWSVSFTSLYNLLKTKLCPYFYVCTYQFTVLFRAAGLAGSDLITALISPTTRGLREAMRNEGIEFSLPLIKESGHKKETASGTSLGYGEEQAISDEDEEESFSWLEEMGVQDKIKKPDILSIKLRKEKHEVQMDHRPESVVLVKGINTFTLLNFLINSKSLVATSGPQAGLPPTLLSPVAFRGATMQMLKARSVNVKTQALSGYRDQFSLEITGPIMPHSLHSLTMLLKSSQSGSFSAVLYPHEPTAVFNICLQMDKVLDMEVVHKELTNCGLHPNTLEQLSQIPLLGKSSLRNVVLRDYIYNWRS</sequence>